<evidence type="ECO:0000255" key="1">
    <source>
        <dbReference type="PROSITE-ProRule" id="PRU01088"/>
    </source>
</evidence>
<evidence type="ECO:0000269" key="2">
    <source>
    </source>
</evidence>
<evidence type="ECO:0000305" key="3"/>
<evidence type="ECO:0007829" key="4">
    <source>
        <dbReference type="PDB" id="1KU8"/>
    </source>
</evidence>
<evidence type="ECO:0007829" key="5">
    <source>
        <dbReference type="PDB" id="4R6R"/>
    </source>
</evidence>
<organism>
    <name type="scientific">Artocarpus integer</name>
    <name type="common">Jack fruit</name>
    <name type="synonym">Artocarpus integrifolia</name>
    <dbReference type="NCBI Taxonomy" id="3490"/>
    <lineage>
        <taxon>Eukaryota</taxon>
        <taxon>Viridiplantae</taxon>
        <taxon>Streptophyta</taxon>
        <taxon>Embryophyta</taxon>
        <taxon>Tracheophyta</taxon>
        <taxon>Spermatophyta</taxon>
        <taxon>Magnoliopsida</taxon>
        <taxon>eudicotyledons</taxon>
        <taxon>Gunneridae</taxon>
        <taxon>Pentapetalae</taxon>
        <taxon>rosids</taxon>
        <taxon>fabids</taxon>
        <taxon>Rosales</taxon>
        <taxon>Moraceae</taxon>
        <taxon>Artocarpeae</taxon>
        <taxon>Artocarpus</taxon>
    </lineage>
</organism>
<proteinExistence type="evidence at protein level"/>
<keyword id="KW-0002">3D-structure</keyword>
<keyword id="KW-0903">Direct protein sequencing</keyword>
<keyword id="KW-0325">Glycoprotein</keyword>
<keyword id="KW-0388">IgA-binding protein</keyword>
<keyword id="KW-0430">Lectin</keyword>
<keyword id="KW-0677">Repeat</keyword>
<name>LECA_ARTIN</name>
<accession>P18670</accession>
<accession>P80023</accession>
<accession>Q9S788</accession>
<comment type="function">
    <text>D-galactose-specific lectin, binds the T-antigen structure Gal-beta1,3-GalNAc (Thomsen-Friedenreich-antigen-specific lectin). Potent and selective stimulant of distinct T- and B-cell functions. Shows a unique ability to specifically recognize IgA-1 from human serum.</text>
</comment>
<comment type="subunit">
    <text evidence="2">Tetramer of four alpha chains associated with two or four beta chains.</text>
</comment>
<comment type="similarity">
    <text evidence="1 3">Belongs to the jacalin lectin family.</text>
</comment>
<reference key="1">
    <citation type="journal article" date="1991" name="FEBS Lett.">
        <title>The amino acid sequences of jacalin and the Maclura pomifera agglutinin.</title>
        <authorList>
            <person name="Young N.M."/>
            <person name="Johnston R.A.Z."/>
            <person name="Watson D.C."/>
        </authorList>
    </citation>
    <scope>PROTEIN SEQUENCE</scope>
    <source>
        <tissue>Seed</tissue>
    </source>
</reference>
<reference key="2">
    <citation type="journal article" date="1992" name="Biochem. J.">
        <title>Primary structure of a Thomsen-Friedenreich-antigen-specific lectin, jacalin [Artocarpus integrifolia (jack fruit) agglutinin]. Evidence for the presence of an internal repeat.</title>
        <authorList>
            <person name="Mahanta S.K."/>
            <person name="Sanker S."/>
            <person name="Prasad Rao N.V.S.A.V."/>
            <person name="Swamy M.J."/>
            <person name="Surolia A."/>
        </authorList>
    </citation>
    <scope>PROTEIN SEQUENCE</scope>
    <source>
        <tissue>Fruit</tissue>
    </source>
</reference>
<reference key="3">
    <citation type="journal article" date="1992" name="Biochem. J.">
        <title>Structural and electron-microscopic studies of jacalin from jackfruit (Artocarpus integrifolia) show that this lectin is a 65 kDa tetramer.</title>
        <authorList>
            <person name="Ruffet E."/>
            <person name="Paquet N."/>
            <person name="Frutiger S."/>
            <person name="Hughes G.J."/>
            <person name="Jaton J.-C."/>
        </authorList>
    </citation>
    <scope>PROTEIN SEQUENCE</scope>
    <scope>VARIANTS ILE-31; THR-45 AND VAL-66</scope>
    <scope>GLYCOSYLATION AT ASN-43 (VARIANT THR-45)</scope>
    <scope>GLYCOSYLATION AT ASN-74</scope>
    <scope>SUBUNIT</scope>
    <source>
        <tissue>Seed</tissue>
    </source>
</reference>
<reference key="4">
    <citation type="journal article" date="1989" name="Arch. Biochem. Biophys.">
        <title>Homology of the D-galactose-specific lectins from Artocarpus integrifolia and Maclura pomifera and the role of an unusual small polypeptide subunit.</title>
        <authorList>
            <person name="Young N.M."/>
            <person name="Johnston R.A.Z."/>
            <person name="Szabo A.G."/>
            <person name="Watson D.C."/>
        </authorList>
    </citation>
    <scope>PROTEIN SEQUENCE OF 1-33</scope>
    <source>
        <tissue>Seed</tissue>
    </source>
</reference>
<reference key="5">
    <citation type="journal article" date="1993" name="Biochim. Biophys. Acta">
        <title>Identification of a novel 4 kDa immunoglobulin-A-binding peptide obtained by the limited proteolysis of jacalin.</title>
        <authorList>
            <person name="Kabir S."/>
            <person name="Aebersold R."/>
            <person name="Daar A.S."/>
        </authorList>
    </citation>
    <scope>PROTEIN SEQUENCE OF 1-29 AND 68-89</scope>
    <source>
        <tissue>Seed</tissue>
    </source>
</reference>
<reference key="6">
    <citation type="journal article" date="1993" name="Biochim. Biophys. Acta">
        <title>The alpha- and beta-subunits of the jacalins are cleavage products from a 17-kDa precursor.</title>
        <authorList>
            <person name="Ngoc L.D."/>
            <person name="Brillard M."/>
            <person name="Hoebeke J."/>
        </authorList>
    </citation>
    <scope>PROTEIN SEQUENCE OF 1-27</scope>
</reference>
<reference key="7">
    <citation type="journal article" date="1996" name="Nat. Struct. Biol.">
        <title>A novel mode of carbohydrate recognition in jacalin, a Moraceae plant lectin with a beta-prism fold.</title>
        <authorList>
            <person name="Sakaranarayanan R."/>
            <person name="Sekar S."/>
            <person name="Banerjee R."/>
            <person name="Sharma V."/>
            <person name="Surolia A."/>
            <person name="Vijayan M."/>
        </authorList>
    </citation>
    <scope>X-RAY CRYSTALLOGRAPHY (2.43 ANGSTROMS)</scope>
</reference>
<feature type="chain" id="PRO_0000072798" description="Agglutinin alpha chain">
    <location>
        <begin position="1"/>
        <end position="133"/>
    </location>
</feature>
<feature type="domain" description="Jacalin-type lectin" evidence="1">
    <location>
        <begin position="1"/>
        <end position="133"/>
    </location>
</feature>
<feature type="repeat">
    <location>
        <begin position="7"/>
        <end position="64"/>
    </location>
</feature>
<feature type="repeat">
    <location>
        <begin position="76"/>
        <end position="130"/>
    </location>
</feature>
<feature type="region of interest" description="IgA-binding">
    <location>
        <begin position="68"/>
        <end position="89"/>
    </location>
</feature>
<feature type="glycosylation site" description="N-linked (GlcNAc...) asparagine; when associated with variant T-45; partial" evidence="2">
    <location>
        <position position="43"/>
    </location>
</feature>
<feature type="glycosylation site" description="N-linked (GlcNAc...) asparagine; partial" evidence="2">
    <location>
        <position position="74"/>
    </location>
</feature>
<feature type="sequence variant" evidence="2">
    <original>V</original>
    <variation>I</variation>
    <location>
        <position position="31"/>
    </location>
</feature>
<feature type="sequence variant">
    <original>L</original>
    <variation>G</variation>
    <location>
        <position position="34"/>
    </location>
</feature>
<feature type="sequence variant">
    <original>K</original>
    <variation>L</variation>
    <location>
        <position position="45"/>
    </location>
</feature>
<feature type="sequence variant" evidence="2">
    <original>K</original>
    <variation>T</variation>
    <location>
        <position position="45"/>
    </location>
</feature>
<feature type="sequence variant">
    <original>M</original>
    <variation>D</variation>
    <location>
        <position position="66"/>
    </location>
</feature>
<feature type="sequence variant" evidence="2">
    <original>M</original>
    <variation>V</variation>
    <location>
        <position position="66"/>
    </location>
</feature>
<feature type="sequence variant">
    <original>E</original>
    <variation>M</variation>
    <location>
        <position position="67"/>
    </location>
</feature>
<feature type="sequence variant">
    <original>T</original>
    <variation>I</variation>
    <location>
        <position position="72"/>
    </location>
</feature>
<feature type="sequence variant">
    <original>N</original>
    <variation>K</variation>
    <location>
        <position position="74"/>
    </location>
</feature>
<feature type="sequence variant">
    <original>T</original>
    <variation>D</variation>
    <location>
        <position position="102"/>
    </location>
</feature>
<feature type="sequence variant">
    <original>I</original>
    <variation>V</variation>
    <location>
        <position position="113"/>
    </location>
</feature>
<feature type="sequence variant">
    <original>L</original>
    <variation>N</variation>
    <location>
        <position position="131"/>
    </location>
</feature>
<feature type="sequence conflict" description="In Ref. 6; AA sequence." evidence="3" ref="6">
    <original>Y</original>
    <variation>I</variation>
    <location>
        <position position="19"/>
    </location>
</feature>
<feature type="sequence conflict" description="In Ref. 2; AA sequence." evidence="3" ref="2">
    <original>V</original>
    <variation>Y</variation>
    <location>
        <position position="75"/>
    </location>
</feature>
<feature type="strand" evidence="5">
    <location>
        <begin position="2"/>
        <end position="5"/>
    </location>
</feature>
<feature type="strand" evidence="5">
    <location>
        <begin position="10"/>
        <end position="19"/>
    </location>
</feature>
<feature type="strand" evidence="4">
    <location>
        <begin position="21"/>
        <end position="23"/>
    </location>
</feature>
<feature type="strand" evidence="5">
    <location>
        <begin position="25"/>
        <end position="34"/>
    </location>
</feature>
<feature type="strand" evidence="5">
    <location>
        <begin position="37"/>
        <end position="40"/>
    </location>
</feature>
<feature type="strand" evidence="5">
    <location>
        <begin position="52"/>
        <end position="57"/>
    </location>
</feature>
<feature type="turn" evidence="5">
    <location>
        <begin position="60"/>
        <end position="62"/>
    </location>
</feature>
<feature type="strand" evidence="5">
    <location>
        <begin position="65"/>
        <end position="75"/>
    </location>
</feature>
<feature type="strand" evidence="5">
    <location>
        <begin position="78"/>
        <end position="90"/>
    </location>
</feature>
<feature type="strand" evidence="5">
    <location>
        <begin position="92"/>
        <end position="97"/>
    </location>
</feature>
<feature type="strand" evidence="5">
    <location>
        <begin position="101"/>
        <end position="110"/>
    </location>
</feature>
<feature type="strand" evidence="5">
    <location>
        <begin position="112"/>
        <end position="132"/>
    </location>
</feature>
<dbReference type="PIR" id="S29641">
    <property type="entry name" value="S29641"/>
</dbReference>
<dbReference type="PDB" id="1JAC">
    <property type="method" value="X-ray"/>
    <property type="resolution" value="2.43 A"/>
    <property type="chains" value="A/C/E/G=1-133"/>
</dbReference>
<dbReference type="PDB" id="1KU8">
    <property type="method" value="X-ray"/>
    <property type="resolution" value="1.75 A"/>
    <property type="chains" value="A/C/E/G=1-133"/>
</dbReference>
<dbReference type="PDB" id="1KUJ">
    <property type="method" value="X-ray"/>
    <property type="resolution" value="2.00 A"/>
    <property type="chains" value="A/C/E/G=1-133"/>
</dbReference>
<dbReference type="PDB" id="1M26">
    <property type="method" value="X-ray"/>
    <property type="resolution" value="1.62 A"/>
    <property type="chains" value="A/C/E/G=1-133"/>
</dbReference>
<dbReference type="PDB" id="1PXD">
    <property type="method" value="X-ray"/>
    <property type="resolution" value="1.80 A"/>
    <property type="chains" value="A=1-133"/>
</dbReference>
<dbReference type="PDB" id="1TOQ">
    <property type="method" value="X-ray"/>
    <property type="resolution" value="2.50 A"/>
    <property type="chains" value="A/C/E/G=1-133"/>
</dbReference>
<dbReference type="PDB" id="1TP8">
    <property type="method" value="X-ray"/>
    <property type="resolution" value="3.00 A"/>
    <property type="chains" value="A/C/E/G=1-133"/>
</dbReference>
<dbReference type="PDB" id="1UGW">
    <property type="method" value="X-ray"/>
    <property type="resolution" value="1.70 A"/>
    <property type="chains" value="A/C/E/G=1-133"/>
</dbReference>
<dbReference type="PDB" id="1UGX">
    <property type="method" value="X-ray"/>
    <property type="resolution" value="1.60 A"/>
    <property type="chains" value="A=1-133"/>
</dbReference>
<dbReference type="PDB" id="1UGY">
    <property type="method" value="X-ray"/>
    <property type="resolution" value="2.40 A"/>
    <property type="chains" value="A/C/E/G=1-133"/>
</dbReference>
<dbReference type="PDB" id="1UH0">
    <property type="method" value="X-ray"/>
    <property type="resolution" value="2.80 A"/>
    <property type="chains" value="A/C/E/G=1-133"/>
</dbReference>
<dbReference type="PDB" id="1UH1">
    <property type="method" value="X-ray"/>
    <property type="resolution" value="2.80 A"/>
    <property type="chains" value="A/C/E/G=1-133"/>
</dbReference>
<dbReference type="PDB" id="1WS4">
    <property type="method" value="X-ray"/>
    <property type="resolution" value="1.90 A"/>
    <property type="chains" value="A/C/E/G=1-133"/>
</dbReference>
<dbReference type="PDB" id="1WS5">
    <property type="method" value="X-ray"/>
    <property type="resolution" value="1.90 A"/>
    <property type="chains" value="A/C/E/G=1-133"/>
</dbReference>
<dbReference type="PDB" id="4AK4">
    <property type="method" value="X-ray"/>
    <property type="resolution" value="1.65 A"/>
    <property type="chains" value="A/C/E/G/I/K/M/O=1-133"/>
</dbReference>
<dbReference type="PDB" id="4AKB">
    <property type="method" value="X-ray"/>
    <property type="resolution" value="1.95 A"/>
    <property type="chains" value="A/C/E/G=1-133"/>
</dbReference>
<dbReference type="PDB" id="4AKC">
    <property type="method" value="X-ray"/>
    <property type="resolution" value="2.30 A"/>
    <property type="chains" value="A/C/E/G=1-133"/>
</dbReference>
<dbReference type="PDB" id="4R6N">
    <property type="method" value="X-ray"/>
    <property type="resolution" value="1.67 A"/>
    <property type="chains" value="A/C/E/G=1-133"/>
</dbReference>
<dbReference type="PDB" id="4R6O">
    <property type="method" value="X-ray"/>
    <property type="resolution" value="1.60 A"/>
    <property type="chains" value="A/C/E/G=1-133"/>
</dbReference>
<dbReference type="PDB" id="4R6P">
    <property type="method" value="X-ray"/>
    <property type="resolution" value="1.70 A"/>
    <property type="chains" value="A/C/E/G=1-133"/>
</dbReference>
<dbReference type="PDB" id="4R6Q">
    <property type="method" value="X-ray"/>
    <property type="resolution" value="1.60 A"/>
    <property type="chains" value="A/C/E/G=1-133"/>
</dbReference>
<dbReference type="PDB" id="4R6R">
    <property type="method" value="X-ray"/>
    <property type="resolution" value="1.38 A"/>
    <property type="chains" value="A/C/E/G=1-133"/>
</dbReference>
<dbReference type="PDB" id="5J4T">
    <property type="method" value="X-ray"/>
    <property type="resolution" value="1.94 A"/>
    <property type="chains" value="A/C/E/G=1-133"/>
</dbReference>
<dbReference type="PDB" id="5J4X">
    <property type="method" value="X-ray"/>
    <property type="resolution" value="1.65 A"/>
    <property type="chains" value="A/C/E/G=1-133"/>
</dbReference>
<dbReference type="PDB" id="5J50">
    <property type="method" value="X-ray"/>
    <property type="resolution" value="2.05 A"/>
    <property type="chains" value="A/C/E/G=1-133"/>
</dbReference>
<dbReference type="PDB" id="5J51">
    <property type="method" value="X-ray"/>
    <property type="resolution" value="1.67 A"/>
    <property type="chains" value="A/C/E/G=1-133"/>
</dbReference>
<dbReference type="PDB" id="5JM1">
    <property type="method" value="X-ray"/>
    <property type="resolution" value="1.95 A"/>
    <property type="chains" value="A/C/E/G=1-133"/>
</dbReference>
<dbReference type="PDBsum" id="1JAC"/>
<dbReference type="PDBsum" id="1KU8"/>
<dbReference type="PDBsum" id="1KUJ"/>
<dbReference type="PDBsum" id="1M26"/>
<dbReference type="PDBsum" id="1PXD"/>
<dbReference type="PDBsum" id="1TOQ"/>
<dbReference type="PDBsum" id="1TP8"/>
<dbReference type="PDBsum" id="1UGW"/>
<dbReference type="PDBsum" id="1UGX"/>
<dbReference type="PDBsum" id="1UGY"/>
<dbReference type="PDBsum" id="1UH0"/>
<dbReference type="PDBsum" id="1UH1"/>
<dbReference type="PDBsum" id="1WS4"/>
<dbReference type="PDBsum" id="1WS5"/>
<dbReference type="PDBsum" id="4AK4"/>
<dbReference type="PDBsum" id="4AKB"/>
<dbReference type="PDBsum" id="4AKC"/>
<dbReference type="PDBsum" id="4R6N"/>
<dbReference type="PDBsum" id="4R6O"/>
<dbReference type="PDBsum" id="4R6P"/>
<dbReference type="PDBsum" id="4R6Q"/>
<dbReference type="PDBsum" id="4R6R"/>
<dbReference type="PDBsum" id="5J4T"/>
<dbReference type="PDBsum" id="5J4X"/>
<dbReference type="PDBsum" id="5J50"/>
<dbReference type="PDBsum" id="5J51"/>
<dbReference type="PDBsum" id="5JM1"/>
<dbReference type="SMR" id="P18670"/>
<dbReference type="UniLectin" id="P18670"/>
<dbReference type="iPTMnet" id="P18670"/>
<dbReference type="EvolutionaryTrace" id="P18670"/>
<dbReference type="GO" id="GO:0030246">
    <property type="term" value="F:carbohydrate binding"/>
    <property type="evidence" value="ECO:0000314"/>
    <property type="project" value="UniProtKB"/>
</dbReference>
<dbReference type="GO" id="GO:0019862">
    <property type="term" value="F:IgA binding"/>
    <property type="evidence" value="ECO:0000314"/>
    <property type="project" value="UniProtKB"/>
</dbReference>
<dbReference type="CDD" id="cd09612">
    <property type="entry name" value="Jacalin"/>
    <property type="match status" value="1"/>
</dbReference>
<dbReference type="FunFam" id="2.100.10.30:FF:000013">
    <property type="entry name" value="Agglutinin alpha chain"/>
    <property type="match status" value="1"/>
</dbReference>
<dbReference type="Gene3D" id="2.100.10.30">
    <property type="entry name" value="Jacalin-like lectin domain"/>
    <property type="match status" value="1"/>
</dbReference>
<dbReference type="InterPro" id="IPR001229">
    <property type="entry name" value="Jacalin-like_lectin_dom"/>
</dbReference>
<dbReference type="InterPro" id="IPR033734">
    <property type="entry name" value="Jacalin-like_lectin_dom_plant"/>
</dbReference>
<dbReference type="InterPro" id="IPR036404">
    <property type="entry name" value="Jacalin-like_lectin_dom_sf"/>
</dbReference>
<dbReference type="PANTHER" id="PTHR47293:SF15">
    <property type="entry name" value="JACALIN-RELATED LECTIN 19"/>
    <property type="match status" value="1"/>
</dbReference>
<dbReference type="PANTHER" id="PTHR47293">
    <property type="entry name" value="JACALIN-RELATED LECTIN 3"/>
    <property type="match status" value="1"/>
</dbReference>
<dbReference type="Pfam" id="PF01419">
    <property type="entry name" value="Jacalin"/>
    <property type="match status" value="1"/>
</dbReference>
<dbReference type="SMART" id="SM00915">
    <property type="entry name" value="Jacalin"/>
    <property type="match status" value="1"/>
</dbReference>
<dbReference type="SUPFAM" id="SSF51101">
    <property type="entry name" value="Mannose-binding lectins"/>
    <property type="match status" value="1"/>
</dbReference>
<dbReference type="PROSITE" id="PS51752">
    <property type="entry name" value="JACALIN_LECTIN"/>
    <property type="match status" value="1"/>
</dbReference>
<sequence length="133" mass="14663">GKAFDDGAFTGIREINLSYNKETAIGDFQVVYDLNGSPYVGQNHKSFITGFTPVKISLDFPSEYIMEVSGYTGNVSGYVVVRSLTFKTNKKTYGPYGVTSGTPFNLPIENGLIVGFKGSIGYWLDYFSMYLSL</sequence>
<protein>
    <recommendedName>
        <fullName>Agglutinin alpha chain</fullName>
    </recommendedName>
    <alternativeName>
        <fullName>Jacalin alpha chain</fullName>
    </alternativeName>
</protein>